<feature type="chain" id="PRO_0000397777" description="Putative mitochondrial carrier protein TRV_02148.2">
    <location>
        <begin position="1"/>
        <end position="385"/>
    </location>
</feature>
<feature type="transmembrane region" description="Helical" evidence="2">
    <location>
        <begin position="30"/>
        <end position="47"/>
    </location>
</feature>
<feature type="transmembrane region" description="Helical" evidence="2">
    <location>
        <begin position="132"/>
        <end position="150"/>
    </location>
</feature>
<feature type="transmembrane region" description="Helical" evidence="2">
    <location>
        <begin position="184"/>
        <end position="207"/>
    </location>
</feature>
<feature type="transmembrane region" description="Helical" evidence="2">
    <location>
        <begin position="263"/>
        <end position="279"/>
    </location>
</feature>
<feature type="transmembrane region" description="Helical" evidence="2">
    <location>
        <begin position="294"/>
        <end position="310"/>
    </location>
</feature>
<feature type="repeat" description="Solcar 1">
    <location>
        <begin position="24"/>
        <end position="124"/>
    </location>
</feature>
<feature type="repeat" description="Solcar 2">
    <location>
        <begin position="130"/>
        <end position="210"/>
    </location>
</feature>
<reference key="1">
    <citation type="journal article" date="2011" name="Genome Biol.">
        <title>Comparative and functional genomics provide insights into the pathogenicity of dermatophytic fungi.</title>
        <authorList>
            <person name="Burmester A."/>
            <person name="Shelest E."/>
            <person name="Gloeckner G."/>
            <person name="Heddergott C."/>
            <person name="Schindler S."/>
            <person name="Staib P."/>
            <person name="Heidel A."/>
            <person name="Felder M."/>
            <person name="Petzold A."/>
            <person name="Szafranski K."/>
            <person name="Feuermann M."/>
            <person name="Pedruzzi I."/>
            <person name="Priebe S."/>
            <person name="Groth M."/>
            <person name="Winkler R."/>
            <person name="Li W."/>
            <person name="Kniemeyer O."/>
            <person name="Schroeckh V."/>
            <person name="Hertweck C."/>
            <person name="Hube B."/>
            <person name="White T.C."/>
            <person name="Platzer M."/>
            <person name="Guthke R."/>
            <person name="Heitman J."/>
            <person name="Woestemeyer J."/>
            <person name="Zipfel P.F."/>
            <person name="Monod M."/>
            <person name="Brakhage A.A."/>
        </authorList>
    </citation>
    <scope>NUCLEOTIDE SEQUENCE [LARGE SCALE GENOMIC DNA]</scope>
    <source>
        <strain>HKI 0517</strain>
    </source>
</reference>
<name>Y2148_TRIVH</name>
<evidence type="ECO:0000250" key="1"/>
<evidence type="ECO:0000255" key="2"/>
<evidence type="ECO:0000305" key="3"/>
<sequence>MNDLRSYDLYTSLVSHSDSITSASNTLTEGTAIALSTALLHPLDSILTRLQVRYASQHHNKKKDNRTRTRKPLDVLGDIVDLAAENVKDAEGRAVLYAGLREAICKQTAENMLVPAVYAALHARRLNLGRTAGNELLLSLVSMAFVKLFTEPLGTIMVRRQVTGSGTRCVVDDILRQKGVGGLWSAYGATLVLCVRSCVLPVVYLALRRRLGMKRGGLLGMLVLRAIAESVVYRLAVMQVCARAGVKAVGNGSKLGSTYTNDYTICVLMVCLGLLLEVIRTLSSQGVTTVTSDVVTVAMMRLSAVMLYMLEPFLLSEQAITDSVRENVDAGASQPLLDDAKYMNNAVKRAISIVNRGIGLASHGRDDVAVAELVGDYVEDGPEDG</sequence>
<protein>
    <recommendedName>
        <fullName>Putative mitochondrial carrier protein TRV_02148.2</fullName>
    </recommendedName>
    <alternativeName>
        <fullName>Leucyl aminopeptidase TRV_02148.2</fullName>
    </alternativeName>
</protein>
<proteinExistence type="inferred from homology"/>
<comment type="function">
    <text evidence="1">May function as a mitochondrial transporter.</text>
</comment>
<comment type="subcellular location">
    <subcellularLocation>
        <location evidence="3">Mitochondrion inner membrane</location>
        <topology evidence="3">Multi-pass membrane protein</topology>
    </subcellularLocation>
</comment>
<comment type="similarity">
    <text evidence="3">Belongs to the mitochondrial carrier (TC 2.A.29) family.</text>
</comment>
<comment type="sequence caution" evidence="3">
    <conflict type="erroneous gene model prediction">
        <sequence resource="EMBL-CDS" id="EFE43096"/>
    </conflict>
    <text>The predicted gene TRV_02148 has been split into 2 genes: TRV_02148.1 and TRV_02148.2.</text>
</comment>
<dbReference type="EMBL" id="ACYE01000114">
    <property type="protein sequence ID" value="EFE43096.1"/>
    <property type="status" value="ALT_SEQ"/>
    <property type="molecule type" value="Genomic_DNA"/>
</dbReference>
<dbReference type="RefSeq" id="XP_003023714.1">
    <property type="nucleotide sequence ID" value="XM_003023668.1"/>
</dbReference>
<dbReference type="SMR" id="P0CH61"/>
<dbReference type="KEGG" id="tve:TRV_02148"/>
<dbReference type="HOGENOM" id="CLU_366463_0_0_1"/>
<dbReference type="OrthoDB" id="2247at34384"/>
<dbReference type="Proteomes" id="UP000008383">
    <property type="component" value="Unassembled WGS sequence"/>
</dbReference>
<dbReference type="GO" id="GO:0005743">
    <property type="term" value="C:mitochondrial inner membrane"/>
    <property type="evidence" value="ECO:0007669"/>
    <property type="project" value="UniProtKB-SubCell"/>
</dbReference>
<dbReference type="GO" id="GO:0015217">
    <property type="term" value="F:ADP transmembrane transporter activity"/>
    <property type="evidence" value="ECO:0007669"/>
    <property type="project" value="TreeGrafter"/>
</dbReference>
<dbReference type="Gene3D" id="1.50.40.10">
    <property type="entry name" value="Mitochondrial carrier domain"/>
    <property type="match status" value="1"/>
</dbReference>
<dbReference type="InterPro" id="IPR052217">
    <property type="entry name" value="Mito/Peroxisomal_Carrier"/>
</dbReference>
<dbReference type="InterPro" id="IPR018108">
    <property type="entry name" value="Mitochondrial_sb/sol_carrier"/>
</dbReference>
<dbReference type="InterPro" id="IPR023395">
    <property type="entry name" value="Mt_carrier_dom_sf"/>
</dbReference>
<dbReference type="PANTHER" id="PTHR45939:SF2">
    <property type="entry name" value="CARRIER PROTEIN, PUTATIVE (AFU_ORTHOLOGUE AFUA_2G13870)-RELATED"/>
    <property type="match status" value="1"/>
</dbReference>
<dbReference type="PANTHER" id="PTHR45939">
    <property type="entry name" value="PEROXISOMAL MEMBRANE PROTEIN PMP34-RELATED"/>
    <property type="match status" value="1"/>
</dbReference>
<dbReference type="Pfam" id="PF00153">
    <property type="entry name" value="Mito_carr"/>
    <property type="match status" value="1"/>
</dbReference>
<dbReference type="SUPFAM" id="SSF103506">
    <property type="entry name" value="Mitochondrial carrier"/>
    <property type="match status" value="1"/>
</dbReference>
<dbReference type="PROSITE" id="PS50920">
    <property type="entry name" value="SOLCAR"/>
    <property type="match status" value="2"/>
</dbReference>
<gene>
    <name type="ORF">TRV_02148.2</name>
</gene>
<keyword id="KW-0472">Membrane</keyword>
<keyword id="KW-0496">Mitochondrion</keyword>
<keyword id="KW-0999">Mitochondrion inner membrane</keyword>
<keyword id="KW-0677">Repeat</keyword>
<keyword id="KW-0812">Transmembrane</keyword>
<keyword id="KW-1133">Transmembrane helix</keyword>
<keyword id="KW-0813">Transport</keyword>
<accession>P0CH61</accession>
<accession>D4D4Y0</accession>
<organism>
    <name type="scientific">Trichophyton verrucosum (strain HKI 0517)</name>
    <dbReference type="NCBI Taxonomy" id="663202"/>
    <lineage>
        <taxon>Eukaryota</taxon>
        <taxon>Fungi</taxon>
        <taxon>Dikarya</taxon>
        <taxon>Ascomycota</taxon>
        <taxon>Pezizomycotina</taxon>
        <taxon>Eurotiomycetes</taxon>
        <taxon>Eurotiomycetidae</taxon>
        <taxon>Onygenales</taxon>
        <taxon>Arthrodermataceae</taxon>
        <taxon>Trichophyton</taxon>
    </lineage>
</organism>